<name>SYE_MYCCT</name>
<protein>
    <recommendedName>
        <fullName evidence="1">Glutamate--tRNA ligase</fullName>
        <ecNumber evidence="1">6.1.1.17</ecNumber>
    </recommendedName>
    <alternativeName>
        <fullName evidence="1">Glutamyl-tRNA synthetase</fullName>
        <shortName evidence="1">GluRS</shortName>
    </alternativeName>
</protein>
<evidence type="ECO:0000255" key="1">
    <source>
        <dbReference type="HAMAP-Rule" id="MF_00022"/>
    </source>
</evidence>
<comment type="function">
    <text evidence="1">Catalyzes the attachment of glutamate to tRNA(Glu) in a two-step reaction: glutamate is first activated by ATP to form Glu-AMP and then transferred to the acceptor end of tRNA(Glu).</text>
</comment>
<comment type="catalytic activity">
    <reaction evidence="1">
        <text>tRNA(Glu) + L-glutamate + ATP = L-glutamyl-tRNA(Glu) + AMP + diphosphate</text>
        <dbReference type="Rhea" id="RHEA:23540"/>
        <dbReference type="Rhea" id="RHEA-COMP:9663"/>
        <dbReference type="Rhea" id="RHEA-COMP:9680"/>
        <dbReference type="ChEBI" id="CHEBI:29985"/>
        <dbReference type="ChEBI" id="CHEBI:30616"/>
        <dbReference type="ChEBI" id="CHEBI:33019"/>
        <dbReference type="ChEBI" id="CHEBI:78442"/>
        <dbReference type="ChEBI" id="CHEBI:78520"/>
        <dbReference type="ChEBI" id="CHEBI:456215"/>
        <dbReference type="EC" id="6.1.1.17"/>
    </reaction>
</comment>
<comment type="subunit">
    <text evidence="1">Monomer.</text>
</comment>
<comment type="subcellular location">
    <subcellularLocation>
        <location evidence="1">Cytoplasm</location>
    </subcellularLocation>
</comment>
<comment type="similarity">
    <text evidence="1">Belongs to the class-I aminoacyl-tRNA synthetase family. Glutamate--tRNA ligase type 1 subfamily.</text>
</comment>
<organism>
    <name type="scientific">Mycoplasma capricolum subsp. capricolum (strain California kid / ATCC 27343 / NCTC 10154)</name>
    <dbReference type="NCBI Taxonomy" id="340047"/>
    <lineage>
        <taxon>Bacteria</taxon>
        <taxon>Bacillati</taxon>
        <taxon>Mycoplasmatota</taxon>
        <taxon>Mollicutes</taxon>
        <taxon>Mycoplasmataceae</taxon>
        <taxon>Mycoplasma</taxon>
    </lineage>
</organism>
<gene>
    <name evidence="1" type="primary">gltX</name>
    <name type="ordered locus">MCAP_0130</name>
</gene>
<sequence length="483" mass="56433">MSFRLRYAPSPTGFLHIGNTRTALMNYLFAKHYNGSFIVRIEDTDLARNVEGAIESQFENLNWLGIYPDESIFNPNDQKYGKYMQSQKFDRYKQLAEQLVDQNKAYRCFCTSEELEKDYEDQTSKGIIATKYSQKCLFLTQDQIQKNLENKKEYSIRFKVPKNKTWTINDIVRGDVSFDSKDLGDFVILKSNGVATYNFAVVVDDYDMQITHVLRGEEHISNTPRQMMIYDAFNWNYPMFGHLTLIVDNTGKKLSKRSGNALFFIEQYKKQGYLSQAIFNYIALLGWSPPGEQEILSQNELIKIFDEKRFSKSPSTFDMVKMKWINSVYMKKLDDDKYLEFVKSFINTNKFDITSKSETWLNHLLLLYKKELEYAEQINDHLDLFFNKNTLDNNTIDVLNNLTNYKNVVEIFKNQINVLKDWTIENIKQIIKDTSTLANVKGKDLFMPIRIFATKSEHGPSLADVIYLLGKTTVLNNINSLER</sequence>
<feature type="chain" id="PRO_0000237371" description="Glutamate--tRNA ligase">
    <location>
        <begin position="1"/>
        <end position="483"/>
    </location>
</feature>
<feature type="short sequence motif" description="'HIGH' region" evidence="1">
    <location>
        <begin position="9"/>
        <end position="19"/>
    </location>
</feature>
<feature type="short sequence motif" description="'KMSKS' region" evidence="1">
    <location>
        <begin position="253"/>
        <end position="257"/>
    </location>
</feature>
<feature type="binding site" evidence="1">
    <location>
        <position position="256"/>
    </location>
    <ligand>
        <name>ATP</name>
        <dbReference type="ChEBI" id="CHEBI:30616"/>
    </ligand>
</feature>
<reference key="1">
    <citation type="submission" date="2005-09" db="EMBL/GenBank/DDBJ databases">
        <authorList>
            <person name="Glass J.I."/>
            <person name="Lartigue C."/>
            <person name="Pfannkoch C."/>
            <person name="Baden-Tillson H."/>
            <person name="Smith H.O."/>
            <person name="Venter J.C."/>
            <person name="Roske K."/>
            <person name="Wise K.S."/>
            <person name="Calcutt M.J."/>
            <person name="Nelson W.C."/>
            <person name="Nierman W.C."/>
        </authorList>
    </citation>
    <scope>NUCLEOTIDE SEQUENCE [LARGE SCALE GENOMIC DNA]</scope>
    <source>
        <strain>California kid / ATCC 27343 / NCTC 10154</strain>
    </source>
</reference>
<keyword id="KW-0030">Aminoacyl-tRNA synthetase</keyword>
<keyword id="KW-0067">ATP-binding</keyword>
<keyword id="KW-0963">Cytoplasm</keyword>
<keyword id="KW-0436">Ligase</keyword>
<keyword id="KW-0547">Nucleotide-binding</keyword>
<keyword id="KW-0648">Protein biosynthesis</keyword>
<dbReference type="EC" id="6.1.1.17" evidence="1"/>
<dbReference type="EMBL" id="CP000123">
    <property type="protein sequence ID" value="ABC01842.1"/>
    <property type="molecule type" value="Genomic_DNA"/>
</dbReference>
<dbReference type="RefSeq" id="WP_011387027.1">
    <property type="nucleotide sequence ID" value="NC_007633.1"/>
</dbReference>
<dbReference type="SMR" id="Q2SSZ1"/>
<dbReference type="GeneID" id="23778917"/>
<dbReference type="KEGG" id="mcp:MCAP_0130"/>
<dbReference type="HOGENOM" id="CLU_015768_6_1_14"/>
<dbReference type="PhylomeDB" id="Q2SSZ1"/>
<dbReference type="Proteomes" id="UP000001928">
    <property type="component" value="Chromosome"/>
</dbReference>
<dbReference type="GO" id="GO:0005829">
    <property type="term" value="C:cytosol"/>
    <property type="evidence" value="ECO:0007669"/>
    <property type="project" value="TreeGrafter"/>
</dbReference>
<dbReference type="GO" id="GO:0005524">
    <property type="term" value="F:ATP binding"/>
    <property type="evidence" value="ECO:0007669"/>
    <property type="project" value="UniProtKB-UniRule"/>
</dbReference>
<dbReference type="GO" id="GO:0004818">
    <property type="term" value="F:glutamate-tRNA ligase activity"/>
    <property type="evidence" value="ECO:0007669"/>
    <property type="project" value="UniProtKB-UniRule"/>
</dbReference>
<dbReference type="GO" id="GO:0000049">
    <property type="term" value="F:tRNA binding"/>
    <property type="evidence" value="ECO:0007669"/>
    <property type="project" value="InterPro"/>
</dbReference>
<dbReference type="GO" id="GO:0008270">
    <property type="term" value="F:zinc ion binding"/>
    <property type="evidence" value="ECO:0007669"/>
    <property type="project" value="InterPro"/>
</dbReference>
<dbReference type="GO" id="GO:0006424">
    <property type="term" value="P:glutamyl-tRNA aminoacylation"/>
    <property type="evidence" value="ECO:0007669"/>
    <property type="project" value="UniProtKB-UniRule"/>
</dbReference>
<dbReference type="CDD" id="cd00808">
    <property type="entry name" value="GluRS_core"/>
    <property type="match status" value="1"/>
</dbReference>
<dbReference type="FunFam" id="3.40.50.620:FF:000007">
    <property type="entry name" value="Glutamate--tRNA ligase"/>
    <property type="match status" value="1"/>
</dbReference>
<dbReference type="Gene3D" id="1.10.10.350">
    <property type="match status" value="1"/>
</dbReference>
<dbReference type="Gene3D" id="3.40.50.620">
    <property type="entry name" value="HUPs"/>
    <property type="match status" value="1"/>
</dbReference>
<dbReference type="HAMAP" id="MF_00022">
    <property type="entry name" value="Glu_tRNA_synth_type1"/>
    <property type="match status" value="1"/>
</dbReference>
<dbReference type="InterPro" id="IPR045462">
    <property type="entry name" value="aa-tRNA-synth_I_cd-bd"/>
</dbReference>
<dbReference type="InterPro" id="IPR020751">
    <property type="entry name" value="aa-tRNA-synth_I_codon-bd_sub2"/>
</dbReference>
<dbReference type="InterPro" id="IPR001412">
    <property type="entry name" value="aa-tRNA-synth_I_CS"/>
</dbReference>
<dbReference type="InterPro" id="IPR008925">
    <property type="entry name" value="aa_tRNA-synth_I_cd-bd_sf"/>
</dbReference>
<dbReference type="InterPro" id="IPR004527">
    <property type="entry name" value="Glu-tRNA-ligase_bac/mito"/>
</dbReference>
<dbReference type="InterPro" id="IPR000924">
    <property type="entry name" value="Glu/Gln-tRNA-synth"/>
</dbReference>
<dbReference type="InterPro" id="IPR020058">
    <property type="entry name" value="Glu/Gln-tRNA-synth_Ib_cat-dom"/>
</dbReference>
<dbReference type="InterPro" id="IPR049940">
    <property type="entry name" value="GluQ/Sye"/>
</dbReference>
<dbReference type="InterPro" id="IPR033910">
    <property type="entry name" value="GluRS_core"/>
</dbReference>
<dbReference type="InterPro" id="IPR014729">
    <property type="entry name" value="Rossmann-like_a/b/a_fold"/>
</dbReference>
<dbReference type="NCBIfam" id="TIGR00464">
    <property type="entry name" value="gltX_bact"/>
    <property type="match status" value="1"/>
</dbReference>
<dbReference type="PANTHER" id="PTHR43311">
    <property type="entry name" value="GLUTAMATE--TRNA LIGASE"/>
    <property type="match status" value="1"/>
</dbReference>
<dbReference type="PANTHER" id="PTHR43311:SF2">
    <property type="entry name" value="GLUTAMATE--TRNA LIGASE, MITOCHONDRIAL-RELATED"/>
    <property type="match status" value="1"/>
</dbReference>
<dbReference type="Pfam" id="PF19269">
    <property type="entry name" value="Anticodon_2"/>
    <property type="match status" value="1"/>
</dbReference>
<dbReference type="Pfam" id="PF00749">
    <property type="entry name" value="tRNA-synt_1c"/>
    <property type="match status" value="1"/>
</dbReference>
<dbReference type="PRINTS" id="PR00987">
    <property type="entry name" value="TRNASYNTHGLU"/>
</dbReference>
<dbReference type="SUPFAM" id="SSF48163">
    <property type="entry name" value="An anticodon-binding domain of class I aminoacyl-tRNA synthetases"/>
    <property type="match status" value="1"/>
</dbReference>
<dbReference type="SUPFAM" id="SSF52374">
    <property type="entry name" value="Nucleotidylyl transferase"/>
    <property type="match status" value="1"/>
</dbReference>
<dbReference type="PROSITE" id="PS00178">
    <property type="entry name" value="AA_TRNA_LIGASE_I"/>
    <property type="match status" value="1"/>
</dbReference>
<accession>Q2SSZ1</accession>
<proteinExistence type="inferred from homology"/>